<name>MURD_STRPC</name>
<protein>
    <recommendedName>
        <fullName evidence="1">UDP-N-acetylmuramoylalanine--D-glutamate ligase</fullName>
        <ecNumber evidence="1">6.3.2.9</ecNumber>
    </recommendedName>
    <alternativeName>
        <fullName evidence="1">D-glutamic acid-adding enzyme</fullName>
    </alternativeName>
    <alternativeName>
        <fullName evidence="1">UDP-N-acetylmuramoyl-L-alanyl-D-glutamate synthetase</fullName>
    </alternativeName>
</protein>
<dbReference type="EC" id="6.3.2.9" evidence="1"/>
<dbReference type="EMBL" id="CP000259">
    <property type="protein sequence ID" value="ABF32435.1"/>
    <property type="molecule type" value="Genomic_DNA"/>
</dbReference>
<dbReference type="RefSeq" id="WP_002989085.1">
    <property type="nucleotide sequence ID" value="NC_008021.1"/>
</dbReference>
<dbReference type="SMR" id="Q1JKY4"/>
<dbReference type="KEGG" id="spk:MGAS9429_Spy1248"/>
<dbReference type="HOGENOM" id="CLU_032540_0_1_9"/>
<dbReference type="UniPathway" id="UPA00219"/>
<dbReference type="Proteomes" id="UP000002433">
    <property type="component" value="Chromosome"/>
</dbReference>
<dbReference type="GO" id="GO:0005737">
    <property type="term" value="C:cytoplasm"/>
    <property type="evidence" value="ECO:0007669"/>
    <property type="project" value="UniProtKB-SubCell"/>
</dbReference>
<dbReference type="GO" id="GO:0005524">
    <property type="term" value="F:ATP binding"/>
    <property type="evidence" value="ECO:0007669"/>
    <property type="project" value="UniProtKB-UniRule"/>
</dbReference>
<dbReference type="GO" id="GO:0008764">
    <property type="term" value="F:UDP-N-acetylmuramoylalanine-D-glutamate ligase activity"/>
    <property type="evidence" value="ECO:0007669"/>
    <property type="project" value="UniProtKB-UniRule"/>
</dbReference>
<dbReference type="GO" id="GO:0051301">
    <property type="term" value="P:cell division"/>
    <property type="evidence" value="ECO:0007669"/>
    <property type="project" value="UniProtKB-KW"/>
</dbReference>
<dbReference type="GO" id="GO:0071555">
    <property type="term" value="P:cell wall organization"/>
    <property type="evidence" value="ECO:0007669"/>
    <property type="project" value="UniProtKB-KW"/>
</dbReference>
<dbReference type="GO" id="GO:0009252">
    <property type="term" value="P:peptidoglycan biosynthetic process"/>
    <property type="evidence" value="ECO:0007669"/>
    <property type="project" value="UniProtKB-UniRule"/>
</dbReference>
<dbReference type="GO" id="GO:0008360">
    <property type="term" value="P:regulation of cell shape"/>
    <property type="evidence" value="ECO:0007669"/>
    <property type="project" value="UniProtKB-KW"/>
</dbReference>
<dbReference type="Gene3D" id="3.90.190.20">
    <property type="entry name" value="Mur ligase, C-terminal domain"/>
    <property type="match status" value="1"/>
</dbReference>
<dbReference type="Gene3D" id="3.40.1190.10">
    <property type="entry name" value="Mur-like, catalytic domain"/>
    <property type="match status" value="1"/>
</dbReference>
<dbReference type="Gene3D" id="3.40.50.720">
    <property type="entry name" value="NAD(P)-binding Rossmann-like Domain"/>
    <property type="match status" value="1"/>
</dbReference>
<dbReference type="HAMAP" id="MF_00639">
    <property type="entry name" value="MurD"/>
    <property type="match status" value="1"/>
</dbReference>
<dbReference type="InterPro" id="IPR036565">
    <property type="entry name" value="Mur-like_cat_sf"/>
</dbReference>
<dbReference type="InterPro" id="IPR004101">
    <property type="entry name" value="Mur_ligase_C"/>
</dbReference>
<dbReference type="InterPro" id="IPR036615">
    <property type="entry name" value="Mur_ligase_C_dom_sf"/>
</dbReference>
<dbReference type="InterPro" id="IPR013221">
    <property type="entry name" value="Mur_ligase_cen"/>
</dbReference>
<dbReference type="InterPro" id="IPR005762">
    <property type="entry name" value="MurD"/>
</dbReference>
<dbReference type="NCBIfam" id="TIGR01087">
    <property type="entry name" value="murD"/>
    <property type="match status" value="1"/>
</dbReference>
<dbReference type="PANTHER" id="PTHR43692">
    <property type="entry name" value="UDP-N-ACETYLMURAMOYLALANINE--D-GLUTAMATE LIGASE"/>
    <property type="match status" value="1"/>
</dbReference>
<dbReference type="PANTHER" id="PTHR43692:SF1">
    <property type="entry name" value="UDP-N-ACETYLMURAMOYLALANINE--D-GLUTAMATE LIGASE"/>
    <property type="match status" value="1"/>
</dbReference>
<dbReference type="Pfam" id="PF02875">
    <property type="entry name" value="Mur_ligase_C"/>
    <property type="match status" value="1"/>
</dbReference>
<dbReference type="Pfam" id="PF08245">
    <property type="entry name" value="Mur_ligase_M"/>
    <property type="match status" value="1"/>
</dbReference>
<dbReference type="Pfam" id="PF21799">
    <property type="entry name" value="MurD-like_N"/>
    <property type="match status" value="1"/>
</dbReference>
<dbReference type="SUPFAM" id="SSF51984">
    <property type="entry name" value="MurCD N-terminal domain"/>
    <property type="match status" value="1"/>
</dbReference>
<dbReference type="SUPFAM" id="SSF53623">
    <property type="entry name" value="MurD-like peptide ligases, catalytic domain"/>
    <property type="match status" value="1"/>
</dbReference>
<dbReference type="SUPFAM" id="SSF53244">
    <property type="entry name" value="MurD-like peptide ligases, peptide-binding domain"/>
    <property type="match status" value="1"/>
</dbReference>
<gene>
    <name evidence="1" type="primary">murD</name>
    <name type="ordered locus">MGAS9429_Spy1248</name>
</gene>
<evidence type="ECO:0000255" key="1">
    <source>
        <dbReference type="HAMAP-Rule" id="MF_00639"/>
    </source>
</evidence>
<accession>Q1JKY4</accession>
<comment type="function">
    <text evidence="1">Cell wall formation. Catalyzes the addition of glutamate to the nucleotide precursor UDP-N-acetylmuramoyl-L-alanine (UMA).</text>
</comment>
<comment type="catalytic activity">
    <reaction evidence="1">
        <text>UDP-N-acetyl-alpha-D-muramoyl-L-alanine + D-glutamate + ATP = UDP-N-acetyl-alpha-D-muramoyl-L-alanyl-D-glutamate + ADP + phosphate + H(+)</text>
        <dbReference type="Rhea" id="RHEA:16429"/>
        <dbReference type="ChEBI" id="CHEBI:15378"/>
        <dbReference type="ChEBI" id="CHEBI:29986"/>
        <dbReference type="ChEBI" id="CHEBI:30616"/>
        <dbReference type="ChEBI" id="CHEBI:43474"/>
        <dbReference type="ChEBI" id="CHEBI:83898"/>
        <dbReference type="ChEBI" id="CHEBI:83900"/>
        <dbReference type="ChEBI" id="CHEBI:456216"/>
        <dbReference type="EC" id="6.3.2.9"/>
    </reaction>
</comment>
<comment type="pathway">
    <text evidence="1">Cell wall biogenesis; peptidoglycan biosynthesis.</text>
</comment>
<comment type="subcellular location">
    <subcellularLocation>
        <location evidence="1">Cytoplasm</location>
    </subcellularLocation>
</comment>
<comment type="similarity">
    <text evidence="1">Belongs to the MurCDEF family.</text>
</comment>
<organism>
    <name type="scientific">Streptococcus pyogenes serotype M12 (strain MGAS9429)</name>
    <dbReference type="NCBI Taxonomy" id="370551"/>
    <lineage>
        <taxon>Bacteria</taxon>
        <taxon>Bacillati</taxon>
        <taxon>Bacillota</taxon>
        <taxon>Bacilli</taxon>
        <taxon>Lactobacillales</taxon>
        <taxon>Streptococcaceae</taxon>
        <taxon>Streptococcus</taxon>
    </lineage>
</organism>
<proteinExistence type="inferred from homology"/>
<sequence length="452" mass="48713">MKVISNFQNKKILILGLAKSGEAAAKLLTKLGALVTVNDSKPFDQNPAAQALLEEGIKVICGSHPVELLDENFEYMVKNPGIPYDNPMVKRALAKEIPILTEVELAYFVSEAPIIGITGSNGKTTTTTMIADVLNAGGQSALLSGNIGYPASKVVQKAIAGDTLVMELSSFQLVGVNAFRPHIAVITNLMPTHLDYHGSFEDYVAAKWMIQAQMTESDYLILNANQEISATLAKTTKATVIPFSTQKVVDGAYLNDGILYFKEQAIIAATDLGVPGSHNIENALATIAVAKLSGIADDIIAQCLSHFGGVKHRLQRVGQIKDITFYNDSKSTNILATKKALSGFDNSRLILIAGGLDRGNEFDDLVPDLLGLKQMIILGESAERMKRAANKAEVSYLEARNVAEATELAFKLAQTGDTILLSPANASWDMYPNFEVRGDEFLATFDCLRGDA</sequence>
<keyword id="KW-0067">ATP-binding</keyword>
<keyword id="KW-0131">Cell cycle</keyword>
<keyword id="KW-0132">Cell division</keyword>
<keyword id="KW-0133">Cell shape</keyword>
<keyword id="KW-0961">Cell wall biogenesis/degradation</keyword>
<keyword id="KW-0963">Cytoplasm</keyword>
<keyword id="KW-0436">Ligase</keyword>
<keyword id="KW-0547">Nucleotide-binding</keyword>
<keyword id="KW-0573">Peptidoglycan synthesis</keyword>
<reference key="1">
    <citation type="journal article" date="2006" name="Proc. Natl. Acad. Sci. U.S.A.">
        <title>Molecular genetic anatomy of inter- and intraserotype variation in the human bacterial pathogen group A Streptococcus.</title>
        <authorList>
            <person name="Beres S.B."/>
            <person name="Richter E.W."/>
            <person name="Nagiec M.J."/>
            <person name="Sumby P."/>
            <person name="Porcella S.F."/>
            <person name="DeLeo F.R."/>
            <person name="Musser J.M."/>
        </authorList>
    </citation>
    <scope>NUCLEOTIDE SEQUENCE [LARGE SCALE GENOMIC DNA]</scope>
    <source>
        <strain>MGAS9429</strain>
    </source>
</reference>
<feature type="chain" id="PRO_0000257248" description="UDP-N-acetylmuramoylalanine--D-glutamate ligase">
    <location>
        <begin position="1"/>
        <end position="452"/>
    </location>
</feature>
<feature type="binding site" evidence="1">
    <location>
        <begin position="119"/>
        <end position="125"/>
    </location>
    <ligand>
        <name>ATP</name>
        <dbReference type="ChEBI" id="CHEBI:30616"/>
    </ligand>
</feature>